<comment type="similarity">
    <text evidence="1">Belongs to the bacterial ribosomal protein bS21 family.</text>
</comment>
<keyword id="KW-0687">Ribonucleoprotein</keyword>
<keyword id="KW-0689">Ribosomal protein</keyword>
<accession>A0KZT9</accession>
<proteinExistence type="inferred from homology"/>
<sequence length="71" mass="8345">MPIIKVRENEPFDVALRRFKRSCEKAGILADVRAREFYEKPTTARKRAKAAAVKRLAKKLSRENARRVRLY</sequence>
<dbReference type="EMBL" id="CP000469">
    <property type="protein sequence ID" value="ABK49308.1"/>
    <property type="molecule type" value="Genomic_DNA"/>
</dbReference>
<dbReference type="RefSeq" id="WP_006080725.1">
    <property type="nucleotide sequence ID" value="NC_008577.1"/>
</dbReference>
<dbReference type="SMR" id="A0KZT9"/>
<dbReference type="STRING" id="94122.Shewana3_3084"/>
<dbReference type="GeneID" id="94729004"/>
<dbReference type="KEGG" id="shn:Shewana3_3084"/>
<dbReference type="eggNOG" id="COG0828">
    <property type="taxonomic scope" value="Bacteria"/>
</dbReference>
<dbReference type="HOGENOM" id="CLU_159258_1_0_6"/>
<dbReference type="OrthoDB" id="9799244at2"/>
<dbReference type="Proteomes" id="UP000002589">
    <property type="component" value="Chromosome"/>
</dbReference>
<dbReference type="GO" id="GO:1990904">
    <property type="term" value="C:ribonucleoprotein complex"/>
    <property type="evidence" value="ECO:0007669"/>
    <property type="project" value="UniProtKB-KW"/>
</dbReference>
<dbReference type="GO" id="GO:0005840">
    <property type="term" value="C:ribosome"/>
    <property type="evidence" value="ECO:0007669"/>
    <property type="project" value="UniProtKB-KW"/>
</dbReference>
<dbReference type="GO" id="GO:0003735">
    <property type="term" value="F:structural constituent of ribosome"/>
    <property type="evidence" value="ECO:0007669"/>
    <property type="project" value="InterPro"/>
</dbReference>
<dbReference type="GO" id="GO:0006412">
    <property type="term" value="P:translation"/>
    <property type="evidence" value="ECO:0007669"/>
    <property type="project" value="UniProtKB-UniRule"/>
</dbReference>
<dbReference type="Gene3D" id="1.20.5.1150">
    <property type="entry name" value="Ribosomal protein S8"/>
    <property type="match status" value="1"/>
</dbReference>
<dbReference type="HAMAP" id="MF_00358">
    <property type="entry name" value="Ribosomal_bS21"/>
    <property type="match status" value="1"/>
</dbReference>
<dbReference type="InterPro" id="IPR001911">
    <property type="entry name" value="Ribosomal_bS21"/>
</dbReference>
<dbReference type="InterPro" id="IPR018278">
    <property type="entry name" value="Ribosomal_bS21_CS"/>
</dbReference>
<dbReference type="InterPro" id="IPR038380">
    <property type="entry name" value="Ribosomal_bS21_sf"/>
</dbReference>
<dbReference type="NCBIfam" id="TIGR00030">
    <property type="entry name" value="S21p"/>
    <property type="match status" value="1"/>
</dbReference>
<dbReference type="PANTHER" id="PTHR21109">
    <property type="entry name" value="MITOCHONDRIAL 28S RIBOSOMAL PROTEIN S21"/>
    <property type="match status" value="1"/>
</dbReference>
<dbReference type="PANTHER" id="PTHR21109:SF22">
    <property type="entry name" value="SMALL RIBOSOMAL SUBUNIT PROTEIN BS21"/>
    <property type="match status" value="1"/>
</dbReference>
<dbReference type="Pfam" id="PF01165">
    <property type="entry name" value="Ribosomal_S21"/>
    <property type="match status" value="1"/>
</dbReference>
<dbReference type="PRINTS" id="PR00976">
    <property type="entry name" value="RIBOSOMALS21"/>
</dbReference>
<dbReference type="PROSITE" id="PS01181">
    <property type="entry name" value="RIBOSOMAL_S21"/>
    <property type="match status" value="1"/>
</dbReference>
<gene>
    <name evidence="1" type="primary">rpsU</name>
    <name type="ordered locus">Shewana3_3084</name>
</gene>
<protein>
    <recommendedName>
        <fullName evidence="1">Small ribosomal subunit protein bS21</fullName>
    </recommendedName>
    <alternativeName>
        <fullName evidence="2">30S ribosomal protein S21</fullName>
    </alternativeName>
</protein>
<evidence type="ECO:0000255" key="1">
    <source>
        <dbReference type="HAMAP-Rule" id="MF_00358"/>
    </source>
</evidence>
<evidence type="ECO:0000305" key="2"/>
<organism>
    <name type="scientific">Shewanella sp. (strain ANA-3)</name>
    <dbReference type="NCBI Taxonomy" id="94122"/>
    <lineage>
        <taxon>Bacteria</taxon>
        <taxon>Pseudomonadati</taxon>
        <taxon>Pseudomonadota</taxon>
        <taxon>Gammaproteobacteria</taxon>
        <taxon>Alteromonadales</taxon>
        <taxon>Shewanellaceae</taxon>
        <taxon>Shewanella</taxon>
    </lineage>
</organism>
<reference key="1">
    <citation type="submission" date="2006-09" db="EMBL/GenBank/DDBJ databases">
        <title>Complete sequence of chromosome 1 of Shewanella sp. ANA-3.</title>
        <authorList>
            <person name="Copeland A."/>
            <person name="Lucas S."/>
            <person name="Lapidus A."/>
            <person name="Barry K."/>
            <person name="Detter J.C."/>
            <person name="Glavina del Rio T."/>
            <person name="Hammon N."/>
            <person name="Israni S."/>
            <person name="Dalin E."/>
            <person name="Tice H."/>
            <person name="Pitluck S."/>
            <person name="Chertkov O."/>
            <person name="Brettin T."/>
            <person name="Bruce D."/>
            <person name="Han C."/>
            <person name="Tapia R."/>
            <person name="Gilna P."/>
            <person name="Schmutz J."/>
            <person name="Larimer F."/>
            <person name="Land M."/>
            <person name="Hauser L."/>
            <person name="Kyrpides N."/>
            <person name="Kim E."/>
            <person name="Newman D."/>
            <person name="Salticov C."/>
            <person name="Konstantinidis K."/>
            <person name="Klappenback J."/>
            <person name="Tiedje J."/>
            <person name="Richardson P."/>
        </authorList>
    </citation>
    <scope>NUCLEOTIDE SEQUENCE [LARGE SCALE GENOMIC DNA]</scope>
    <source>
        <strain>ANA-3</strain>
    </source>
</reference>
<feature type="chain" id="PRO_1000005173" description="Small ribosomal subunit protein bS21">
    <location>
        <begin position="1"/>
        <end position="71"/>
    </location>
</feature>
<name>RS21_SHESA</name>